<comment type="function">
    <text evidence="2 3">Succinyl-CoA synthetase functions in the citric acid cycle (TCA), coupling the hydrolysis of succinyl-CoA to the synthesis of ATP and thus represents the only step of substrate-level phosphorylation in the TCA. The alpha subunit of the enzyme binds the substrates coenzyme A and phosphate, while succinate binding and nucleotide specificity is provided by the beta subunit.</text>
</comment>
<comment type="catalytic activity">
    <reaction evidence="2 3">
        <text>succinate + ATP + CoA = succinyl-CoA + ADP + phosphate</text>
        <dbReference type="Rhea" id="RHEA:17661"/>
        <dbReference type="ChEBI" id="CHEBI:30031"/>
        <dbReference type="ChEBI" id="CHEBI:30616"/>
        <dbReference type="ChEBI" id="CHEBI:43474"/>
        <dbReference type="ChEBI" id="CHEBI:57287"/>
        <dbReference type="ChEBI" id="CHEBI:57292"/>
        <dbReference type="ChEBI" id="CHEBI:456216"/>
        <dbReference type="EC" id="6.2.1.5"/>
    </reaction>
</comment>
<comment type="biophysicochemical properties">
    <kinetics>
        <text evidence="3">kcat is 133 min(-1) with ATP as substrate.</text>
    </kinetics>
</comment>
<comment type="pathway">
    <text evidence="2 5">Carbohydrate metabolism; tricarboxylic acid cycle; succinate from succinyl-CoA (ligase route): step 1/1.</text>
</comment>
<comment type="subunit">
    <text evidence="2">Heterodimer of an alpha and a beta subunit.</text>
</comment>
<comment type="subcellular location">
    <subcellularLocation>
        <location evidence="3">Hydrogenosome</location>
    </subcellularLocation>
    <text evidence="3">Found in the matrix of the mitochondrion-like organelles (MLO) of Blastocystis.</text>
</comment>
<comment type="similarity">
    <text evidence="2">Belongs to the succinate/malate CoA ligase alpha subunit family.</text>
</comment>
<dbReference type="EC" id="6.2.1.5" evidence="2 3"/>
<dbReference type="EMBL" id="EU076378">
    <property type="protein sequence ID" value="ABY62723.1"/>
    <property type="molecule type" value="mRNA"/>
</dbReference>
<dbReference type="EMBL" id="EU090061">
    <property type="protein sequence ID" value="ABW76150.1"/>
    <property type="molecule type" value="Genomic_DNA"/>
</dbReference>
<dbReference type="EMBL" id="LXWW01000228">
    <property type="protein sequence ID" value="OAO14631.1"/>
    <property type="molecule type" value="Genomic_DNA"/>
</dbReference>
<dbReference type="SMR" id="B3FHT4"/>
<dbReference type="STRING" id="478820.B3FHT4"/>
<dbReference type="OrthoDB" id="1664372at2759"/>
<dbReference type="UniPathway" id="UPA00223">
    <property type="reaction ID" value="UER00999"/>
</dbReference>
<dbReference type="Proteomes" id="UP000078348">
    <property type="component" value="Unassembled WGS sequence"/>
</dbReference>
<dbReference type="GO" id="GO:0042566">
    <property type="term" value="C:hydrogenosome"/>
    <property type="evidence" value="ECO:0007669"/>
    <property type="project" value="UniProtKB-SubCell"/>
</dbReference>
<dbReference type="GO" id="GO:0005739">
    <property type="term" value="C:mitochondrion"/>
    <property type="evidence" value="ECO:0007669"/>
    <property type="project" value="TreeGrafter"/>
</dbReference>
<dbReference type="GO" id="GO:0009361">
    <property type="term" value="C:succinate-CoA ligase complex (ADP-forming)"/>
    <property type="evidence" value="ECO:0007669"/>
    <property type="project" value="TreeGrafter"/>
</dbReference>
<dbReference type="GO" id="GO:0000166">
    <property type="term" value="F:nucleotide binding"/>
    <property type="evidence" value="ECO:0007669"/>
    <property type="project" value="UniProtKB-KW"/>
</dbReference>
<dbReference type="GO" id="GO:0004775">
    <property type="term" value="F:succinate-CoA ligase (ADP-forming) activity"/>
    <property type="evidence" value="ECO:0007669"/>
    <property type="project" value="UniProtKB-UniRule"/>
</dbReference>
<dbReference type="GO" id="GO:0004776">
    <property type="term" value="F:succinate-CoA ligase (GDP-forming) activity"/>
    <property type="evidence" value="ECO:0007669"/>
    <property type="project" value="TreeGrafter"/>
</dbReference>
<dbReference type="GO" id="GO:0006099">
    <property type="term" value="P:tricarboxylic acid cycle"/>
    <property type="evidence" value="ECO:0007669"/>
    <property type="project" value="UniProtKB-UniRule"/>
</dbReference>
<dbReference type="FunFam" id="3.40.50.720:FF:000002">
    <property type="entry name" value="Succinate--CoA ligase [ADP-forming] subunit alpha"/>
    <property type="match status" value="1"/>
</dbReference>
<dbReference type="FunFam" id="3.40.50.261:FF:000005">
    <property type="entry name" value="Succinate--CoA ligase [ADP-forming] subunit alpha, mitochondrial"/>
    <property type="match status" value="1"/>
</dbReference>
<dbReference type="Gene3D" id="3.40.50.720">
    <property type="entry name" value="NAD(P)-binding Rossmann-like Domain"/>
    <property type="match status" value="1"/>
</dbReference>
<dbReference type="Gene3D" id="3.40.50.261">
    <property type="entry name" value="Succinyl-CoA synthetase domains"/>
    <property type="match status" value="1"/>
</dbReference>
<dbReference type="HAMAP" id="MF_01988">
    <property type="entry name" value="Succ_CoA_alpha"/>
    <property type="match status" value="1"/>
</dbReference>
<dbReference type="InterPro" id="IPR017440">
    <property type="entry name" value="Cit_synth/succinyl-CoA_lig_AS"/>
</dbReference>
<dbReference type="InterPro" id="IPR033847">
    <property type="entry name" value="Citrt_syn/SCS-alpha_CS"/>
</dbReference>
<dbReference type="InterPro" id="IPR003781">
    <property type="entry name" value="CoA-bd"/>
</dbReference>
<dbReference type="InterPro" id="IPR005810">
    <property type="entry name" value="CoA_lig_alpha"/>
</dbReference>
<dbReference type="InterPro" id="IPR036291">
    <property type="entry name" value="NAD(P)-bd_dom_sf"/>
</dbReference>
<dbReference type="InterPro" id="IPR005811">
    <property type="entry name" value="SUCC_ACL_C"/>
</dbReference>
<dbReference type="InterPro" id="IPR016102">
    <property type="entry name" value="Succinyl-CoA_synth-like"/>
</dbReference>
<dbReference type="NCBIfam" id="NF004230">
    <property type="entry name" value="PRK05678.1"/>
    <property type="match status" value="1"/>
</dbReference>
<dbReference type="NCBIfam" id="TIGR01019">
    <property type="entry name" value="sucCoAalpha"/>
    <property type="match status" value="1"/>
</dbReference>
<dbReference type="PANTHER" id="PTHR11117:SF2">
    <property type="entry name" value="SUCCINATE--COA LIGASE [ADP_GDP-FORMING] SUBUNIT ALPHA, MITOCHONDRIAL"/>
    <property type="match status" value="1"/>
</dbReference>
<dbReference type="PANTHER" id="PTHR11117">
    <property type="entry name" value="SUCCINYL-COA LIGASE SUBUNIT ALPHA"/>
    <property type="match status" value="1"/>
</dbReference>
<dbReference type="Pfam" id="PF02629">
    <property type="entry name" value="CoA_binding"/>
    <property type="match status" value="1"/>
</dbReference>
<dbReference type="Pfam" id="PF00549">
    <property type="entry name" value="Ligase_CoA"/>
    <property type="match status" value="1"/>
</dbReference>
<dbReference type="PIRSF" id="PIRSF001553">
    <property type="entry name" value="SucCS_alpha"/>
    <property type="match status" value="1"/>
</dbReference>
<dbReference type="PRINTS" id="PR01798">
    <property type="entry name" value="SCOASYNTHASE"/>
</dbReference>
<dbReference type="SMART" id="SM00881">
    <property type="entry name" value="CoA_binding"/>
    <property type="match status" value="1"/>
</dbReference>
<dbReference type="SUPFAM" id="SSF51735">
    <property type="entry name" value="NAD(P)-binding Rossmann-fold domains"/>
    <property type="match status" value="1"/>
</dbReference>
<dbReference type="SUPFAM" id="SSF52210">
    <property type="entry name" value="Succinyl-CoA synthetase domains"/>
    <property type="match status" value="1"/>
</dbReference>
<dbReference type="PROSITE" id="PS01216">
    <property type="entry name" value="SUCCINYL_COA_LIG_1"/>
    <property type="match status" value="1"/>
</dbReference>
<dbReference type="PROSITE" id="PS00399">
    <property type="entry name" value="SUCCINYL_COA_LIG_2"/>
    <property type="match status" value="1"/>
</dbReference>
<name>SUCA_BLAHN</name>
<proteinExistence type="evidence at protein level"/>
<feature type="transit peptide" description="Hydrogenosome" evidence="1">
    <location>
        <begin position="1"/>
        <end position="18"/>
    </location>
</feature>
<feature type="chain" id="PRO_0000438594" description="Succinate--CoA ligase [ADP-forming] subunit alpha">
    <location>
        <begin position="19"/>
        <end position="318"/>
    </location>
</feature>
<feature type="active site" description="Tele-phosphohistidine intermediate" evidence="2">
    <location>
        <position position="271"/>
    </location>
</feature>
<feature type="binding site" evidence="2">
    <location>
        <begin position="38"/>
        <end position="41"/>
    </location>
    <ligand>
        <name>CoA</name>
        <dbReference type="ChEBI" id="CHEBI:57287"/>
    </ligand>
</feature>
<feature type="binding site" evidence="2">
    <location>
        <position position="64"/>
    </location>
    <ligand>
        <name>CoA</name>
        <dbReference type="ChEBI" id="CHEBI:57287"/>
    </ligand>
</feature>
<feature type="binding site" evidence="2">
    <location>
        <begin position="117"/>
        <end position="119"/>
    </location>
    <ligand>
        <name>CoA</name>
        <dbReference type="ChEBI" id="CHEBI:57287"/>
    </ligand>
</feature>
<feature type="binding site" evidence="2">
    <location>
        <position position="181"/>
    </location>
    <ligand>
        <name>substrate</name>
        <note>ligand shared with subunit beta</note>
    </ligand>
</feature>
<protein>
    <recommendedName>
        <fullName evidence="5">Succinate--CoA ligase [ADP-forming] subunit alpha</fullName>
        <ecNumber evidence="2 3">6.2.1.5</ecNumber>
    </recommendedName>
    <alternativeName>
        <fullName evidence="2 4">Succinyl-CoA synthetase subunit alpha</fullName>
        <shortName evidence="2">SCS-alpha</shortName>
    </alternativeName>
</protein>
<keyword id="KW-0377">Hydrogenosome</keyword>
<keyword id="KW-0436">Ligase</keyword>
<keyword id="KW-0547">Nucleotide-binding</keyword>
<keyword id="KW-1185">Reference proteome</keyword>
<keyword id="KW-0809">Transit peptide</keyword>
<keyword id="KW-0816">Tricarboxylic acid cycle</keyword>
<organism>
    <name type="scientific">Blastocystis sp. subtype 1 (strain ATCC 50177 / NandII)</name>
    <dbReference type="NCBI Taxonomy" id="478820"/>
    <lineage>
        <taxon>Eukaryota</taxon>
        <taxon>Sar</taxon>
        <taxon>Stramenopiles</taxon>
        <taxon>Bigyra</taxon>
        <taxon>Opalozoa</taxon>
        <taxon>Opalinata</taxon>
        <taxon>Blastocystidae</taxon>
        <taxon>Blastocystis</taxon>
    </lineage>
</organism>
<sequence length="318" mass="33380">MLSRVSQVSRVGFSLARASSTARVWVDKNTRVIGQGITGKNGTFHTQQAIEYGTKMVGGVNPKKAGTTHLGLPIFASVEEAKKATNADATVIYVPPSGAAGAILEAVAAEIPLIVCITEGIPQHDMLRVKDIMKSQNKSRLIGPNCPGIIKPEECKIGIMPGYIHKKGKIGIVSRSGTLTYEAVHQTTMYGLGQSTVVGIGGDPFNGTNFIDCLERFTNDPQTEGIVMIGEIGGTAEEDAAEWLKQYGNPNKPVVSFIAGRTAPPGRRMGHAGAIISGGKGTAKAKMEALTSAGVKVVETPAMIGEAMFNMMKAAGKA</sequence>
<reference key="1">
    <citation type="journal article" date="2008" name="Mol. Microbiol.">
        <title>Localization and nucleotide specificity of Blastocystis succinyl-CoA synthetase.</title>
        <authorList>
            <person name="Hamblin K."/>
            <person name="Standley D.M."/>
            <person name="Rogers M.B."/>
            <person name="Stechmann A."/>
            <person name="Roger A.J."/>
            <person name="Maytum R."/>
            <person name="van der Giezen M."/>
        </authorList>
    </citation>
    <scope>NUCLEOTIDE SEQUENCE [GENOMIC DNA / MRNA]</scope>
    <scope>FUNCTION</scope>
    <scope>CATALYTIC ACTIVITY</scope>
    <scope>SUBCELLULAR LOCATION</scope>
    <scope>SUBSTRATE SPECIFICITY</scope>
    <scope>BIOPHYSICOCHEMICAL PROPERTIES</scope>
    <source>
        <strain>ATCC 50177 / NandII</strain>
    </source>
</reference>
<reference key="2">
    <citation type="submission" date="2016-05" db="EMBL/GenBank/DDBJ databases">
        <title>Nuclear genome of Blastocystis sp. subtype 1 NandII.</title>
        <authorList>
            <person name="Gentekaki E."/>
            <person name="Curtis B."/>
            <person name="Stairs C."/>
            <person name="Eme L."/>
            <person name="Herman E."/>
            <person name="Klimes V."/>
            <person name="Arias M.C."/>
            <person name="Elias M."/>
            <person name="Hilliou F."/>
            <person name="Klute M."/>
            <person name="Malik S.-B."/>
            <person name="Pightling A."/>
            <person name="Rachubinski R."/>
            <person name="Salas D."/>
            <person name="Schlacht A."/>
            <person name="Suga H."/>
            <person name="Archibald J."/>
            <person name="Ball S.G."/>
            <person name="Clark G."/>
            <person name="Dacks J."/>
            <person name="Van Der Giezen M."/>
            <person name="Tsaousis A."/>
            <person name="Roger A."/>
        </authorList>
    </citation>
    <scope>NUCLEOTIDE SEQUENCE [LARGE SCALE GENOMIC DNA]</scope>
    <source>
        <strain>ATCC 50177 / NandII</strain>
    </source>
</reference>
<gene>
    <name type="primary">SCSa</name>
</gene>
<evidence type="ECO:0000255" key="1"/>
<evidence type="ECO:0000255" key="2">
    <source>
        <dbReference type="HAMAP-Rule" id="MF_03222"/>
    </source>
</evidence>
<evidence type="ECO:0000269" key="3">
    <source>
    </source>
</evidence>
<evidence type="ECO:0000303" key="4">
    <source>
    </source>
</evidence>
<evidence type="ECO:0000305" key="5">
    <source>
    </source>
</evidence>
<accession>B3FHT4</accession>
<accession>B3FHN9</accession>